<proteinExistence type="inferred from homology"/>
<protein>
    <recommendedName>
        <fullName evidence="1">Beta-ketoacyl-[acyl-carrier-protein] synthase III</fullName>
        <shortName evidence="1">Beta-ketoacyl-ACP synthase III</shortName>
        <shortName evidence="1">KAS III</shortName>
        <ecNumber evidence="1">2.3.1.180</ecNumber>
    </recommendedName>
    <alternativeName>
        <fullName evidence="1">3-oxoacyl-[acyl-carrier-protein] synthase 3</fullName>
    </alternativeName>
    <alternativeName>
        <fullName evidence="1">3-oxoacyl-[acyl-carrier-protein] synthase III</fullName>
    </alternativeName>
</protein>
<feature type="chain" id="PRO_1000070217" description="Beta-ketoacyl-[acyl-carrier-protein] synthase III">
    <location>
        <begin position="1"/>
        <end position="329"/>
    </location>
</feature>
<feature type="region of interest" description="ACP-binding" evidence="1">
    <location>
        <begin position="257"/>
        <end position="261"/>
    </location>
</feature>
<feature type="active site" evidence="1">
    <location>
        <position position="123"/>
    </location>
</feature>
<feature type="active site" evidence="1">
    <location>
        <position position="256"/>
    </location>
</feature>
<feature type="active site" evidence="1">
    <location>
        <position position="286"/>
    </location>
</feature>
<sequence>MAQSTLYSRVLGTGSYLPPDRVTNQELADRLAKDGIETSDEWIVARTGIRARHFAAPDVTTSDLALVAAQRAIEAADVDPQSIDLIIVATSTPDFVFPSTACLLQNKLGIKNGGAAFDVQAVCSGFAYALATADSFIRTGQHRTALVIGAEAFSRILDFKDRTTCVLFGDGAGAVVLSASEEPGILGSALHADGSYSNILCTPGNVNRGVIAGSAFLHMDGQAVFKLAVNVLEKVAVEALSKAELASEQVDWLIPHQANIRIMTSTCRKLGLPQERMIVTVDEHGNTSAASIPLALDVAVRDGRIKRGQHVLIEGVGGGFTWGASVFRF</sequence>
<evidence type="ECO:0000255" key="1">
    <source>
        <dbReference type="HAMAP-Rule" id="MF_01815"/>
    </source>
</evidence>
<keyword id="KW-0012">Acyltransferase</keyword>
<keyword id="KW-0963">Cytoplasm</keyword>
<keyword id="KW-0275">Fatty acid biosynthesis</keyword>
<keyword id="KW-0276">Fatty acid metabolism</keyword>
<keyword id="KW-0444">Lipid biosynthesis</keyword>
<keyword id="KW-0443">Lipid metabolism</keyword>
<keyword id="KW-0511">Multifunctional enzyme</keyword>
<keyword id="KW-0808">Transferase</keyword>
<accession>A3MM55</accession>
<organism>
    <name type="scientific">Burkholderia mallei (strain NCTC 10247)</name>
    <dbReference type="NCBI Taxonomy" id="320389"/>
    <lineage>
        <taxon>Bacteria</taxon>
        <taxon>Pseudomonadati</taxon>
        <taxon>Pseudomonadota</taxon>
        <taxon>Betaproteobacteria</taxon>
        <taxon>Burkholderiales</taxon>
        <taxon>Burkholderiaceae</taxon>
        <taxon>Burkholderia</taxon>
        <taxon>pseudomallei group</taxon>
    </lineage>
</organism>
<comment type="function">
    <text evidence="1">Catalyzes the condensation reaction of fatty acid synthesis by the addition to an acyl acceptor of two carbons from malonyl-ACP. Catalyzes the first condensation reaction which initiates fatty acid synthesis and may therefore play a role in governing the total rate of fatty acid production. Possesses both acetoacetyl-ACP synthase and acetyl transacylase activities. Its substrate specificity determines the biosynthesis of branched-chain and/or straight-chain of fatty acids.</text>
</comment>
<comment type="catalytic activity">
    <reaction evidence="1">
        <text>malonyl-[ACP] + acetyl-CoA + H(+) = 3-oxobutanoyl-[ACP] + CO2 + CoA</text>
        <dbReference type="Rhea" id="RHEA:12080"/>
        <dbReference type="Rhea" id="RHEA-COMP:9623"/>
        <dbReference type="Rhea" id="RHEA-COMP:9625"/>
        <dbReference type="ChEBI" id="CHEBI:15378"/>
        <dbReference type="ChEBI" id="CHEBI:16526"/>
        <dbReference type="ChEBI" id="CHEBI:57287"/>
        <dbReference type="ChEBI" id="CHEBI:57288"/>
        <dbReference type="ChEBI" id="CHEBI:78449"/>
        <dbReference type="ChEBI" id="CHEBI:78450"/>
        <dbReference type="EC" id="2.3.1.180"/>
    </reaction>
</comment>
<comment type="pathway">
    <text evidence="1">Lipid metabolism; fatty acid biosynthesis.</text>
</comment>
<comment type="subunit">
    <text evidence="1">Homodimer.</text>
</comment>
<comment type="subcellular location">
    <subcellularLocation>
        <location evidence="1">Cytoplasm</location>
    </subcellularLocation>
</comment>
<comment type="domain">
    <text evidence="1">The last Arg residue of the ACP-binding site is essential for the weak association between ACP/AcpP and FabH.</text>
</comment>
<comment type="similarity">
    <text evidence="1">Belongs to the thiolase-like superfamily. FabH family.</text>
</comment>
<gene>
    <name evidence="1" type="primary">fabH</name>
    <name type="ordered locus">BMA10247_1802</name>
</gene>
<dbReference type="EC" id="2.3.1.180" evidence="1"/>
<dbReference type="EMBL" id="CP000548">
    <property type="protein sequence ID" value="ABO06994.1"/>
    <property type="molecule type" value="Genomic_DNA"/>
</dbReference>
<dbReference type="RefSeq" id="WP_004191537.1">
    <property type="nucleotide sequence ID" value="NZ_CP007802.1"/>
</dbReference>
<dbReference type="SMR" id="A3MM55"/>
<dbReference type="KEGG" id="bmaz:BM44_1397"/>
<dbReference type="KEGG" id="bmn:BMA10247_1802"/>
<dbReference type="PATRIC" id="fig|320389.8.peg.1558"/>
<dbReference type="UniPathway" id="UPA00094"/>
<dbReference type="GO" id="GO:0005737">
    <property type="term" value="C:cytoplasm"/>
    <property type="evidence" value="ECO:0007669"/>
    <property type="project" value="UniProtKB-SubCell"/>
</dbReference>
<dbReference type="GO" id="GO:0004315">
    <property type="term" value="F:3-oxoacyl-[acyl-carrier-protein] synthase activity"/>
    <property type="evidence" value="ECO:0007669"/>
    <property type="project" value="InterPro"/>
</dbReference>
<dbReference type="GO" id="GO:0033818">
    <property type="term" value="F:beta-ketoacyl-acyl-carrier-protein synthase III activity"/>
    <property type="evidence" value="ECO:0007669"/>
    <property type="project" value="UniProtKB-UniRule"/>
</dbReference>
<dbReference type="GO" id="GO:0006633">
    <property type="term" value="P:fatty acid biosynthetic process"/>
    <property type="evidence" value="ECO:0007669"/>
    <property type="project" value="UniProtKB-UniRule"/>
</dbReference>
<dbReference type="CDD" id="cd00830">
    <property type="entry name" value="KAS_III"/>
    <property type="match status" value="1"/>
</dbReference>
<dbReference type="FunFam" id="3.40.47.10:FF:000004">
    <property type="entry name" value="3-oxoacyl-[acyl-carrier-protein] synthase 3"/>
    <property type="match status" value="1"/>
</dbReference>
<dbReference type="Gene3D" id="3.40.47.10">
    <property type="match status" value="1"/>
</dbReference>
<dbReference type="HAMAP" id="MF_01815">
    <property type="entry name" value="FabH"/>
    <property type="match status" value="1"/>
</dbReference>
<dbReference type="InterPro" id="IPR013747">
    <property type="entry name" value="ACP_syn_III_C"/>
</dbReference>
<dbReference type="InterPro" id="IPR013751">
    <property type="entry name" value="ACP_syn_III_N"/>
</dbReference>
<dbReference type="InterPro" id="IPR004655">
    <property type="entry name" value="FabH"/>
</dbReference>
<dbReference type="InterPro" id="IPR016039">
    <property type="entry name" value="Thiolase-like"/>
</dbReference>
<dbReference type="NCBIfam" id="TIGR00747">
    <property type="entry name" value="fabH"/>
    <property type="match status" value="1"/>
</dbReference>
<dbReference type="NCBIfam" id="NF006829">
    <property type="entry name" value="PRK09352.1"/>
    <property type="match status" value="1"/>
</dbReference>
<dbReference type="PANTHER" id="PTHR43091">
    <property type="entry name" value="3-OXOACYL-[ACYL-CARRIER-PROTEIN] SYNTHASE"/>
    <property type="match status" value="1"/>
</dbReference>
<dbReference type="PANTHER" id="PTHR43091:SF1">
    <property type="entry name" value="BETA-KETOACYL-[ACYL-CARRIER-PROTEIN] SYNTHASE III, CHLOROPLASTIC"/>
    <property type="match status" value="1"/>
</dbReference>
<dbReference type="Pfam" id="PF08545">
    <property type="entry name" value="ACP_syn_III"/>
    <property type="match status" value="1"/>
</dbReference>
<dbReference type="Pfam" id="PF08541">
    <property type="entry name" value="ACP_syn_III_C"/>
    <property type="match status" value="1"/>
</dbReference>
<dbReference type="SUPFAM" id="SSF53901">
    <property type="entry name" value="Thiolase-like"/>
    <property type="match status" value="1"/>
</dbReference>
<reference key="1">
    <citation type="journal article" date="2010" name="Genome Biol. Evol.">
        <title>Continuing evolution of Burkholderia mallei through genome reduction and large-scale rearrangements.</title>
        <authorList>
            <person name="Losada L."/>
            <person name="Ronning C.M."/>
            <person name="DeShazer D."/>
            <person name="Woods D."/>
            <person name="Fedorova N."/>
            <person name="Kim H.S."/>
            <person name="Shabalina S.A."/>
            <person name="Pearson T.R."/>
            <person name="Brinkac L."/>
            <person name="Tan P."/>
            <person name="Nandi T."/>
            <person name="Crabtree J."/>
            <person name="Badger J."/>
            <person name="Beckstrom-Sternberg S."/>
            <person name="Saqib M."/>
            <person name="Schutzer S.E."/>
            <person name="Keim P."/>
            <person name="Nierman W.C."/>
        </authorList>
    </citation>
    <scope>NUCLEOTIDE SEQUENCE [LARGE SCALE GENOMIC DNA]</scope>
    <source>
        <strain>NCTC 10247</strain>
    </source>
</reference>
<name>FABH_BURM7</name>